<protein>
    <recommendedName>
        <fullName>Gamma-aminobutyric acid receptor subunit alpha-1</fullName>
    </recommendedName>
    <alternativeName>
        <fullName evidence="2">GABA(A) receptor subunit alpha-1</fullName>
        <shortName evidence="2">GABAAR subunit alpha-1</shortName>
    </alternativeName>
</protein>
<evidence type="ECO:0000250" key="1">
    <source>
        <dbReference type="UniProtKB" id="P08219"/>
    </source>
</evidence>
<evidence type="ECO:0000250" key="2">
    <source>
        <dbReference type="UniProtKB" id="P14867"/>
    </source>
</evidence>
<evidence type="ECO:0000250" key="3">
    <source>
        <dbReference type="UniProtKB" id="P62812"/>
    </source>
</evidence>
<evidence type="ECO:0000250" key="4">
    <source>
        <dbReference type="UniProtKB" id="P62813"/>
    </source>
</evidence>
<evidence type="ECO:0000255" key="5"/>
<evidence type="ECO:0000305" key="6"/>
<gene>
    <name type="primary">GABRA1</name>
</gene>
<accession>Q5R6B2</accession>
<comment type="function">
    <text evidence="1 2 3 4">Alpha subunit of the heteropentameric ligand-gated chloride channel gated by gamma-aminobutyric acid (GABA), a major inhibitory neurotransmitter in the brain. GABA-gated chloride channels, also named GABA(A) receptors (GABAAR), consist of five subunits arranged around a central pore and contain GABA active binding site(s) located at the alpha and beta subunit interface(s) (By similarity). When activated by GABA, GABAARs selectively allow the flow of chloride anions across the cell membrane down their electrochemical gradient (By similarity). Alpha-1/GABRA1-containing GABAARs are largely synaptic (By similarity). Chloride influx into the postsynaptic neuron following GABAAR opening decreases the neuron ability to generate a new action potential, thereby reducing nerve transmission (By similarity). GABAARs containing alpha-1 and beta-2 or -3 subunits exhibit synaptogenic activity; the gamma-2 subunit being necessary but not sufficient to induce rapid synaptic contacts formation (By similarity). GABAARs function also as histamine receptor where histamine binds at the interface of two neighboring beta subunits and potentiates GABA response (By similarity). GABAARs containing alpha, beta and epsilon subunits also permit spontaneous chloride channel activity while preserving the structural information required for GABA-gated openings (By similarity). Alpha-1-mediated plasticity in the orbitofrontal cortex regulates context-dependent action selection (By similarity). Together with rho subunits, may also control neuronal and glial GABAergic transmission in the cerebellum (By similarity).</text>
</comment>
<comment type="catalytic activity">
    <reaction evidence="1">
        <text>chloride(in) = chloride(out)</text>
        <dbReference type="Rhea" id="RHEA:29823"/>
        <dbReference type="ChEBI" id="CHEBI:17996"/>
    </reaction>
</comment>
<comment type="activity regulation">
    <text evidence="2 4">Allosterically activated by benzodiazepines, the neuroanesthetic alphaxalone and pentobarbital (By similarity). Inhibited by the antagonist bicuculline (By similarity). Potentiated by histamine (By similarity).</text>
</comment>
<comment type="subunit">
    <text evidence="2 3 4">Heteropentamer, formed by a combination of alpha (GABRA1-6), beta (GABRB1-3), gamma (GABRG1-3), delta (GABRD), epsilon (GABRE), rho (GABRR1-3), pi (GABRP) and theta (GABRQ) subunits, each subunit exhibiting distinct physiological and pharmacological properties (By similarity). Interacts with UBQLN1 (By similarity). Interacts with TRAK1 (By similarity). Interacts with KIF21B (By similarity). Identified in a complex of 720 kDa composed of LHFPL4, NLGN2, GABRA1, GABRB2, GABRG2 and GABRB3 (By similarity). Interacts with LHFPL4 (By similarity). Interacts with NLGN2 (By similarity). Interacts with SHISA7; interaction leads to the regulation of GABA(A) receptor trafficking, channel deactivation kinetics and pharmacology (By similarity).</text>
</comment>
<comment type="subcellular location">
    <subcellularLocation>
        <location evidence="1">Postsynaptic cell membrane</location>
        <topology evidence="2">Multi-pass membrane protein</topology>
    </subcellularLocation>
    <subcellularLocation>
        <location evidence="4">Cell membrane</location>
        <topology evidence="2">Multi-pass membrane protein</topology>
    </subcellularLocation>
    <subcellularLocation>
        <location evidence="4">Cytoplasmic vesicle membrane</location>
    </subcellularLocation>
</comment>
<comment type="domain">
    <text evidence="3">The extracellular domain contributes to synaptic contact formation.</text>
</comment>
<comment type="domain">
    <text evidence="2">The GABA-binding pockets are located at the interface between neighboring alpha and beta subunits.</text>
</comment>
<comment type="domain">
    <text evidence="2">GABAARs subunits share a common topological structure: a peptide sequence made up of a long extracellular N-terminal, four transmembrane domains, intracellular or cytoplasmic domain located between the third and the fourth transmembrane domains.</text>
</comment>
<comment type="similarity">
    <text evidence="6">Belongs to the ligand-gated ion channel (TC 1.A.9) family. Gamma-aminobutyric acid receptor (TC 1.A.9.5) subfamily. GABRA1 sub-subfamily.</text>
</comment>
<proteinExistence type="evidence at transcript level"/>
<keyword id="KW-1003">Cell membrane</keyword>
<keyword id="KW-0868">Chloride</keyword>
<keyword id="KW-0869">Chloride channel</keyword>
<keyword id="KW-0968">Cytoplasmic vesicle</keyword>
<keyword id="KW-1015">Disulfide bond</keyword>
<keyword id="KW-0325">Glycoprotein</keyword>
<keyword id="KW-0407">Ion channel</keyword>
<keyword id="KW-0406">Ion transport</keyword>
<keyword id="KW-1071">Ligand-gated ion channel</keyword>
<keyword id="KW-0472">Membrane</keyword>
<keyword id="KW-0628">Postsynaptic cell membrane</keyword>
<keyword id="KW-0675">Receptor</keyword>
<keyword id="KW-1185">Reference proteome</keyword>
<keyword id="KW-0732">Signal</keyword>
<keyword id="KW-0770">Synapse</keyword>
<keyword id="KW-0812">Transmembrane</keyword>
<keyword id="KW-1133">Transmembrane helix</keyword>
<keyword id="KW-0813">Transport</keyword>
<organism>
    <name type="scientific">Pongo abelii</name>
    <name type="common">Sumatran orangutan</name>
    <name type="synonym">Pongo pygmaeus abelii</name>
    <dbReference type="NCBI Taxonomy" id="9601"/>
    <lineage>
        <taxon>Eukaryota</taxon>
        <taxon>Metazoa</taxon>
        <taxon>Chordata</taxon>
        <taxon>Craniata</taxon>
        <taxon>Vertebrata</taxon>
        <taxon>Euteleostomi</taxon>
        <taxon>Mammalia</taxon>
        <taxon>Eutheria</taxon>
        <taxon>Euarchontoglires</taxon>
        <taxon>Primates</taxon>
        <taxon>Haplorrhini</taxon>
        <taxon>Catarrhini</taxon>
        <taxon>Hominidae</taxon>
        <taxon>Pongo</taxon>
    </lineage>
</organism>
<feature type="signal peptide" evidence="5">
    <location>
        <begin position="1"/>
        <end position="27"/>
    </location>
</feature>
<feature type="chain" id="PRO_0000290198" description="Gamma-aminobutyric acid receptor subunit alpha-1">
    <location>
        <begin position="28"/>
        <end position="456"/>
    </location>
</feature>
<feature type="topological domain" description="Extracellular" evidence="6">
    <location>
        <begin position="28"/>
        <end position="253"/>
    </location>
</feature>
<feature type="transmembrane region" description="Helical" evidence="2">
    <location>
        <begin position="254"/>
        <end position="274"/>
    </location>
</feature>
<feature type="topological domain" description="Cytoplasmic" evidence="6">
    <location>
        <begin position="275"/>
        <end position="279"/>
    </location>
</feature>
<feature type="transmembrane region" description="Helical" evidence="2">
    <location>
        <begin position="280"/>
        <end position="301"/>
    </location>
</feature>
<feature type="topological domain" description="Extracellular" evidence="6">
    <location>
        <begin position="302"/>
        <end position="311"/>
    </location>
</feature>
<feature type="transmembrane region" description="Helical" evidence="2">
    <location>
        <begin position="312"/>
        <end position="333"/>
    </location>
</feature>
<feature type="topological domain" description="Cytoplasmic" evidence="6">
    <location>
        <begin position="334"/>
        <end position="421"/>
    </location>
</feature>
<feature type="transmembrane region" description="Helical" evidence="2">
    <location>
        <begin position="422"/>
        <end position="441"/>
    </location>
</feature>
<feature type="topological domain" description="Extracellular" evidence="6">
    <location>
        <begin position="442"/>
        <end position="456"/>
    </location>
</feature>
<feature type="binding site" evidence="2 4">
    <location>
        <position position="94"/>
    </location>
    <ligand>
        <name>4-aminobutanoate</name>
        <dbReference type="ChEBI" id="CHEBI:59888"/>
        <note>ligand shared with the neighboring beta subunit</note>
    </ligand>
</feature>
<feature type="binding site" evidence="4">
    <location>
        <position position="157"/>
    </location>
    <ligand>
        <name>4-aminobutanoate</name>
        <dbReference type="ChEBI" id="CHEBI:59888"/>
        <note>ligand shared with the neighboring beta subunit</note>
    </ligand>
</feature>
<feature type="glycosylation site" description="N-linked (GlcNAc...) asparagine" evidence="5">
    <location>
        <position position="38"/>
    </location>
</feature>
<feature type="glycosylation site" description="N-linked (GlcNAc...) asparagine" evidence="2">
    <location>
        <position position="138"/>
    </location>
</feature>
<feature type="disulfide bond" evidence="2">
    <location>
        <begin position="166"/>
        <end position="180"/>
    </location>
</feature>
<name>GBRA1_PONAB</name>
<reference key="1">
    <citation type="submission" date="2004-11" db="EMBL/GenBank/DDBJ databases">
        <authorList>
            <consortium name="The German cDNA consortium"/>
        </authorList>
    </citation>
    <scope>NUCLEOTIDE SEQUENCE [LARGE SCALE MRNA]</scope>
    <source>
        <tissue>Brain cortex</tissue>
    </source>
</reference>
<sequence length="456" mass="51717">MRKSPGLSDCLWAWILLLSTLTGRSYGQPSLQDELKDNTTVFTRILDRLLDGYDNRLRPGLGERVTEVKTDIFVTSFGPVSDHDMEYTIDVFFRQSWKDERLKFKGPMTVLRLNNLMASKIWTPDTFFHNGKKSVAHNMTMPNKLLRITEDGTLLYTMRLTVRAECPMHLEDFPMDAHACPLKFGSYAYTRAEVVYEWTREPARSVVVAEDGSRLNQYDLLGQTVDSGIVQSSTGEYVVMTTHFHLKRKIGYFVIQTYLPCIMTVILSQVSFWLNRESVPARTVFGVTTVLTMTTLSISARNSLPKVAYATAMDWFIAVCYAFVFSALIEFATVNYFTKRGYAWDGKSVVPEKPKKVKDPLIKKNNTYAPTATSYTPNLAGGDPGLATIAKSATIEPKEVKPETKPPEPKKTFNSVSKIDRLSRIAFPLLFGIFNLIYWATYLNREPQLKAPTPHQ</sequence>
<dbReference type="EMBL" id="CR860579">
    <property type="protein sequence ID" value="CAH92704.1"/>
    <property type="molecule type" value="mRNA"/>
</dbReference>
<dbReference type="SMR" id="Q5R6B2"/>
<dbReference type="STRING" id="9601.ENSPPYP00000017922"/>
<dbReference type="GlyCosmos" id="Q5R6B2">
    <property type="glycosylation" value="2 sites, No reported glycans"/>
</dbReference>
<dbReference type="eggNOG" id="KOG3642">
    <property type="taxonomic scope" value="Eukaryota"/>
</dbReference>
<dbReference type="InParanoid" id="Q5R6B2"/>
<dbReference type="Proteomes" id="UP000001595">
    <property type="component" value="Unplaced"/>
</dbReference>
<dbReference type="GO" id="GO:0034707">
    <property type="term" value="C:chloride channel complex"/>
    <property type="evidence" value="ECO:0007669"/>
    <property type="project" value="UniProtKB-KW"/>
</dbReference>
<dbReference type="GO" id="GO:0030659">
    <property type="term" value="C:cytoplasmic vesicle membrane"/>
    <property type="evidence" value="ECO:0007669"/>
    <property type="project" value="UniProtKB-SubCell"/>
</dbReference>
<dbReference type="GO" id="GO:1902711">
    <property type="term" value="C:GABA-A receptor complex"/>
    <property type="evidence" value="ECO:0000250"/>
    <property type="project" value="UniProtKB"/>
</dbReference>
<dbReference type="GO" id="GO:0099634">
    <property type="term" value="C:postsynaptic specialization membrane"/>
    <property type="evidence" value="ECO:0000250"/>
    <property type="project" value="UniProtKB"/>
</dbReference>
<dbReference type="GO" id="GO:0004890">
    <property type="term" value="F:GABA-A receptor activity"/>
    <property type="evidence" value="ECO:0000250"/>
    <property type="project" value="UniProtKB"/>
</dbReference>
<dbReference type="GO" id="GO:0022851">
    <property type="term" value="F:GABA-gated chloride ion channel activity"/>
    <property type="evidence" value="ECO:0000250"/>
    <property type="project" value="UniProtKB"/>
</dbReference>
<dbReference type="GO" id="GO:0007214">
    <property type="term" value="P:gamma-aminobutyric acid signaling pathway"/>
    <property type="evidence" value="ECO:0007669"/>
    <property type="project" value="InterPro"/>
</dbReference>
<dbReference type="GO" id="GO:1904862">
    <property type="term" value="P:inhibitory synapse assembly"/>
    <property type="evidence" value="ECO:0000250"/>
    <property type="project" value="UniProtKB"/>
</dbReference>
<dbReference type="CDD" id="cd19034">
    <property type="entry name" value="LGIC_ECD_GABAAR_A1"/>
    <property type="match status" value="1"/>
</dbReference>
<dbReference type="CDD" id="cd19052">
    <property type="entry name" value="LGIC_TM_GABAAR_alpha"/>
    <property type="match status" value="1"/>
</dbReference>
<dbReference type="FunFam" id="2.70.170.10:FF:000001">
    <property type="entry name" value="Gamma-aminobutyric acid A receptor subunit alpha-2"/>
    <property type="match status" value="1"/>
</dbReference>
<dbReference type="FunFam" id="1.20.58.390:FF:000002">
    <property type="entry name" value="Putative gamma-aminobutyric acid receptor subunit alpha-5"/>
    <property type="match status" value="1"/>
</dbReference>
<dbReference type="Gene3D" id="2.70.170.10">
    <property type="entry name" value="Neurotransmitter-gated ion-channel ligand-binding domain"/>
    <property type="match status" value="1"/>
</dbReference>
<dbReference type="Gene3D" id="1.20.58.390">
    <property type="entry name" value="Neurotransmitter-gated ion-channel transmembrane domain"/>
    <property type="match status" value="1"/>
</dbReference>
<dbReference type="InterPro" id="IPR006028">
    <property type="entry name" value="GABAA/Glycine_rcpt"/>
</dbReference>
<dbReference type="InterPro" id="IPR001390">
    <property type="entry name" value="GABAAa_rcpt"/>
</dbReference>
<dbReference type="InterPro" id="IPR005431">
    <property type="entry name" value="GABBAa1_rcpt"/>
</dbReference>
<dbReference type="InterPro" id="IPR047024">
    <property type="entry name" value="Gabra-1-6_TM"/>
</dbReference>
<dbReference type="InterPro" id="IPR047079">
    <property type="entry name" value="GABRA1_ECD"/>
</dbReference>
<dbReference type="InterPro" id="IPR006202">
    <property type="entry name" value="Neur_chan_lig-bd"/>
</dbReference>
<dbReference type="InterPro" id="IPR036734">
    <property type="entry name" value="Neur_chan_lig-bd_sf"/>
</dbReference>
<dbReference type="InterPro" id="IPR006201">
    <property type="entry name" value="Neur_channel"/>
</dbReference>
<dbReference type="InterPro" id="IPR036719">
    <property type="entry name" value="Neuro-gated_channel_TM_sf"/>
</dbReference>
<dbReference type="InterPro" id="IPR038050">
    <property type="entry name" value="Neuro_actylchol_rec"/>
</dbReference>
<dbReference type="InterPro" id="IPR006029">
    <property type="entry name" value="Neurotrans-gated_channel_TM"/>
</dbReference>
<dbReference type="InterPro" id="IPR018000">
    <property type="entry name" value="Neurotransmitter_ion_chnl_CS"/>
</dbReference>
<dbReference type="NCBIfam" id="TIGR00860">
    <property type="entry name" value="LIC"/>
    <property type="match status" value="1"/>
</dbReference>
<dbReference type="PANTHER" id="PTHR18945">
    <property type="entry name" value="NEUROTRANSMITTER GATED ION CHANNEL"/>
    <property type="match status" value="1"/>
</dbReference>
<dbReference type="Pfam" id="PF02931">
    <property type="entry name" value="Neur_chan_LBD"/>
    <property type="match status" value="1"/>
</dbReference>
<dbReference type="Pfam" id="PF02932">
    <property type="entry name" value="Neur_chan_memb"/>
    <property type="match status" value="2"/>
</dbReference>
<dbReference type="PRINTS" id="PR01079">
    <property type="entry name" value="GABAARALPHA"/>
</dbReference>
<dbReference type="PRINTS" id="PR01614">
    <property type="entry name" value="GABAARALPHA1"/>
</dbReference>
<dbReference type="PRINTS" id="PR00253">
    <property type="entry name" value="GABAARECEPTR"/>
</dbReference>
<dbReference type="PRINTS" id="PR00252">
    <property type="entry name" value="NRIONCHANNEL"/>
</dbReference>
<dbReference type="SUPFAM" id="SSF90112">
    <property type="entry name" value="Neurotransmitter-gated ion-channel transmembrane pore"/>
    <property type="match status" value="1"/>
</dbReference>
<dbReference type="SUPFAM" id="SSF63712">
    <property type="entry name" value="Nicotinic receptor ligand binding domain-like"/>
    <property type="match status" value="1"/>
</dbReference>
<dbReference type="PROSITE" id="PS00236">
    <property type="entry name" value="NEUROTR_ION_CHANNEL"/>
    <property type="match status" value="1"/>
</dbReference>